<proteinExistence type="inferred from homology"/>
<evidence type="ECO:0000250" key="1"/>
<evidence type="ECO:0000255" key="2">
    <source>
        <dbReference type="HAMAP-Rule" id="MF_00103"/>
    </source>
</evidence>
<keyword id="KW-0227">DNA damage</keyword>
<keyword id="KW-0234">DNA repair</keyword>
<keyword id="KW-0238">DNA-binding</keyword>
<keyword id="KW-0326">Glycosidase</keyword>
<keyword id="KW-0378">Hydrolase</keyword>
<keyword id="KW-0456">Lyase</keyword>
<keyword id="KW-0479">Metal-binding</keyword>
<keyword id="KW-0511">Multifunctional enzyme</keyword>
<keyword id="KW-1185">Reference proteome</keyword>
<keyword id="KW-0862">Zinc</keyword>
<keyword id="KW-0863">Zinc-finger</keyword>
<sequence length="269" mass="30260">MPELPEVETSRRGIEPHLVGATILHAVVRNGRLRWPVSEEIYRLSDQPVLSVQRRAKYLLLELPEGWIIIHLGMSGSLRILPEELPPEKHDHVDLVMSNGKVLRYTDPRRFGAWLWTKELEGHNVLAHLGPEPLSDDFNGEYLHQKCAKKKTAIKPWLMDNKLVVGVGNIYASESLFAAGIHPDRLASSLSLAECELLARVIKAVLLRSIEQGGTTLKDFLQSDGKPGYFAQELQVYGRKGEPCRVCGTPIVATKHAQRATFYCRQCQK</sequence>
<dbReference type="EC" id="3.2.2.23" evidence="2"/>
<dbReference type="EC" id="4.2.99.18" evidence="2"/>
<dbReference type="EMBL" id="CU928161">
    <property type="protein sequence ID" value="CAR05258.1"/>
    <property type="molecule type" value="Genomic_DNA"/>
</dbReference>
<dbReference type="RefSeq" id="WP_001114533.1">
    <property type="nucleotide sequence ID" value="NC_011742.1"/>
</dbReference>
<dbReference type="SMR" id="B7MFJ6"/>
<dbReference type="GeneID" id="93778348"/>
<dbReference type="KEGG" id="ecz:ECS88_4049"/>
<dbReference type="HOGENOM" id="CLU_038423_1_1_6"/>
<dbReference type="Proteomes" id="UP000000747">
    <property type="component" value="Chromosome"/>
</dbReference>
<dbReference type="GO" id="GO:0034039">
    <property type="term" value="F:8-oxo-7,8-dihydroguanine DNA N-glycosylase activity"/>
    <property type="evidence" value="ECO:0007669"/>
    <property type="project" value="TreeGrafter"/>
</dbReference>
<dbReference type="GO" id="GO:0140078">
    <property type="term" value="F:class I DNA-(apurinic or apyrimidinic site) endonuclease activity"/>
    <property type="evidence" value="ECO:0007669"/>
    <property type="project" value="UniProtKB-EC"/>
</dbReference>
<dbReference type="GO" id="GO:0003684">
    <property type="term" value="F:damaged DNA binding"/>
    <property type="evidence" value="ECO:0007669"/>
    <property type="project" value="InterPro"/>
</dbReference>
<dbReference type="GO" id="GO:0008270">
    <property type="term" value="F:zinc ion binding"/>
    <property type="evidence" value="ECO:0007669"/>
    <property type="project" value="UniProtKB-UniRule"/>
</dbReference>
<dbReference type="GO" id="GO:0006284">
    <property type="term" value="P:base-excision repair"/>
    <property type="evidence" value="ECO:0007669"/>
    <property type="project" value="InterPro"/>
</dbReference>
<dbReference type="CDD" id="cd08966">
    <property type="entry name" value="EcFpg-like_N"/>
    <property type="match status" value="1"/>
</dbReference>
<dbReference type="FunFam" id="1.10.8.50:FF:000003">
    <property type="entry name" value="Formamidopyrimidine-DNA glycosylase"/>
    <property type="match status" value="1"/>
</dbReference>
<dbReference type="FunFam" id="3.20.190.10:FF:000001">
    <property type="entry name" value="Formamidopyrimidine-DNA glycosylase"/>
    <property type="match status" value="1"/>
</dbReference>
<dbReference type="Gene3D" id="1.10.8.50">
    <property type="match status" value="1"/>
</dbReference>
<dbReference type="Gene3D" id="3.20.190.10">
    <property type="entry name" value="MutM-like, N-terminal"/>
    <property type="match status" value="1"/>
</dbReference>
<dbReference type="HAMAP" id="MF_00103">
    <property type="entry name" value="Fapy_DNA_glycosyl"/>
    <property type="match status" value="1"/>
</dbReference>
<dbReference type="InterPro" id="IPR015886">
    <property type="entry name" value="DNA_glyclase/AP_lyase_DNA-bd"/>
</dbReference>
<dbReference type="InterPro" id="IPR015887">
    <property type="entry name" value="DNA_glyclase_Znf_dom_DNA_BS"/>
</dbReference>
<dbReference type="InterPro" id="IPR020629">
    <property type="entry name" value="Formamido-pyr_DNA_Glyclase"/>
</dbReference>
<dbReference type="InterPro" id="IPR012319">
    <property type="entry name" value="FPG_cat"/>
</dbReference>
<dbReference type="InterPro" id="IPR035937">
    <property type="entry name" value="MutM-like_N-ter"/>
</dbReference>
<dbReference type="InterPro" id="IPR010979">
    <property type="entry name" value="Ribosomal_uS13-like_H2TH"/>
</dbReference>
<dbReference type="InterPro" id="IPR000214">
    <property type="entry name" value="Znf_DNA_glyclase/AP_lyase"/>
</dbReference>
<dbReference type="InterPro" id="IPR010663">
    <property type="entry name" value="Znf_FPG/IleRS"/>
</dbReference>
<dbReference type="NCBIfam" id="TIGR00577">
    <property type="entry name" value="fpg"/>
    <property type="match status" value="1"/>
</dbReference>
<dbReference type="NCBIfam" id="NF002211">
    <property type="entry name" value="PRK01103.1"/>
    <property type="match status" value="1"/>
</dbReference>
<dbReference type="PANTHER" id="PTHR22993">
    <property type="entry name" value="FORMAMIDOPYRIMIDINE-DNA GLYCOSYLASE"/>
    <property type="match status" value="1"/>
</dbReference>
<dbReference type="PANTHER" id="PTHR22993:SF9">
    <property type="entry name" value="FORMAMIDOPYRIMIDINE-DNA GLYCOSYLASE"/>
    <property type="match status" value="1"/>
</dbReference>
<dbReference type="Pfam" id="PF01149">
    <property type="entry name" value="Fapy_DNA_glyco"/>
    <property type="match status" value="1"/>
</dbReference>
<dbReference type="Pfam" id="PF06831">
    <property type="entry name" value="H2TH"/>
    <property type="match status" value="1"/>
</dbReference>
<dbReference type="Pfam" id="PF06827">
    <property type="entry name" value="zf-FPG_IleRS"/>
    <property type="match status" value="1"/>
</dbReference>
<dbReference type="SMART" id="SM00898">
    <property type="entry name" value="Fapy_DNA_glyco"/>
    <property type="match status" value="1"/>
</dbReference>
<dbReference type="SMART" id="SM01232">
    <property type="entry name" value="H2TH"/>
    <property type="match status" value="1"/>
</dbReference>
<dbReference type="SUPFAM" id="SSF57716">
    <property type="entry name" value="Glucocorticoid receptor-like (DNA-binding domain)"/>
    <property type="match status" value="1"/>
</dbReference>
<dbReference type="SUPFAM" id="SSF81624">
    <property type="entry name" value="N-terminal domain of MutM-like DNA repair proteins"/>
    <property type="match status" value="1"/>
</dbReference>
<dbReference type="SUPFAM" id="SSF46946">
    <property type="entry name" value="S13-like H2TH domain"/>
    <property type="match status" value="1"/>
</dbReference>
<dbReference type="PROSITE" id="PS51068">
    <property type="entry name" value="FPG_CAT"/>
    <property type="match status" value="1"/>
</dbReference>
<dbReference type="PROSITE" id="PS01242">
    <property type="entry name" value="ZF_FPG_1"/>
    <property type="match status" value="1"/>
</dbReference>
<dbReference type="PROSITE" id="PS51066">
    <property type="entry name" value="ZF_FPG_2"/>
    <property type="match status" value="1"/>
</dbReference>
<organism>
    <name type="scientific">Escherichia coli O45:K1 (strain S88 / ExPEC)</name>
    <dbReference type="NCBI Taxonomy" id="585035"/>
    <lineage>
        <taxon>Bacteria</taxon>
        <taxon>Pseudomonadati</taxon>
        <taxon>Pseudomonadota</taxon>
        <taxon>Gammaproteobacteria</taxon>
        <taxon>Enterobacterales</taxon>
        <taxon>Enterobacteriaceae</taxon>
        <taxon>Escherichia</taxon>
    </lineage>
</organism>
<gene>
    <name evidence="2" type="primary">mutM</name>
    <name evidence="2" type="synonym">fpg</name>
    <name type="ordered locus">ECS88_4049</name>
</gene>
<feature type="initiator methionine" description="Removed" evidence="1">
    <location>
        <position position="1"/>
    </location>
</feature>
<feature type="chain" id="PRO_1000117380" description="Formamidopyrimidine-DNA glycosylase">
    <location>
        <begin position="2"/>
        <end position="269"/>
    </location>
</feature>
<feature type="zinc finger region" description="FPG-type" evidence="2">
    <location>
        <begin position="235"/>
        <end position="269"/>
    </location>
</feature>
<feature type="active site" description="Schiff-base intermediate with DNA" evidence="2">
    <location>
        <position position="2"/>
    </location>
</feature>
<feature type="active site" description="Proton donor" evidence="2">
    <location>
        <position position="3"/>
    </location>
</feature>
<feature type="active site" description="Proton donor; for beta-elimination activity" evidence="2">
    <location>
        <position position="57"/>
    </location>
</feature>
<feature type="active site" description="Proton donor; for delta-elimination activity" evidence="2">
    <location>
        <position position="259"/>
    </location>
</feature>
<feature type="binding site" evidence="2">
    <location>
        <position position="90"/>
    </location>
    <ligand>
        <name>DNA</name>
        <dbReference type="ChEBI" id="CHEBI:16991"/>
    </ligand>
</feature>
<feature type="binding site" evidence="2">
    <location>
        <position position="109"/>
    </location>
    <ligand>
        <name>DNA</name>
        <dbReference type="ChEBI" id="CHEBI:16991"/>
    </ligand>
</feature>
<feature type="binding site" evidence="2">
    <location>
        <position position="150"/>
    </location>
    <ligand>
        <name>DNA</name>
        <dbReference type="ChEBI" id="CHEBI:16991"/>
    </ligand>
</feature>
<name>FPG_ECO45</name>
<reference key="1">
    <citation type="journal article" date="2009" name="PLoS Genet.">
        <title>Organised genome dynamics in the Escherichia coli species results in highly diverse adaptive paths.</title>
        <authorList>
            <person name="Touchon M."/>
            <person name="Hoede C."/>
            <person name="Tenaillon O."/>
            <person name="Barbe V."/>
            <person name="Baeriswyl S."/>
            <person name="Bidet P."/>
            <person name="Bingen E."/>
            <person name="Bonacorsi S."/>
            <person name="Bouchier C."/>
            <person name="Bouvet O."/>
            <person name="Calteau A."/>
            <person name="Chiapello H."/>
            <person name="Clermont O."/>
            <person name="Cruveiller S."/>
            <person name="Danchin A."/>
            <person name="Diard M."/>
            <person name="Dossat C."/>
            <person name="Karoui M.E."/>
            <person name="Frapy E."/>
            <person name="Garry L."/>
            <person name="Ghigo J.M."/>
            <person name="Gilles A.M."/>
            <person name="Johnson J."/>
            <person name="Le Bouguenec C."/>
            <person name="Lescat M."/>
            <person name="Mangenot S."/>
            <person name="Martinez-Jehanne V."/>
            <person name="Matic I."/>
            <person name="Nassif X."/>
            <person name="Oztas S."/>
            <person name="Petit M.A."/>
            <person name="Pichon C."/>
            <person name="Rouy Z."/>
            <person name="Ruf C.S."/>
            <person name="Schneider D."/>
            <person name="Tourret J."/>
            <person name="Vacherie B."/>
            <person name="Vallenet D."/>
            <person name="Medigue C."/>
            <person name="Rocha E.P.C."/>
            <person name="Denamur E."/>
        </authorList>
    </citation>
    <scope>NUCLEOTIDE SEQUENCE [LARGE SCALE GENOMIC DNA]</scope>
    <source>
        <strain>S88 / ExPEC</strain>
    </source>
</reference>
<protein>
    <recommendedName>
        <fullName evidence="2">Formamidopyrimidine-DNA glycosylase</fullName>
        <shortName evidence="2">Fapy-DNA glycosylase</shortName>
        <ecNumber evidence="2">3.2.2.23</ecNumber>
    </recommendedName>
    <alternativeName>
        <fullName evidence="2">DNA-(apurinic or apyrimidinic site) lyase MutM</fullName>
        <shortName evidence="2">AP lyase MutM</shortName>
        <ecNumber evidence="2">4.2.99.18</ecNumber>
    </alternativeName>
</protein>
<comment type="function">
    <text evidence="2">Involved in base excision repair of DNA damaged by oxidation or by mutagenic agents. Acts as a DNA glycosylase that recognizes and removes damaged bases. Has a preference for oxidized purines, such as 7,8-dihydro-8-oxoguanine (8-oxoG). Has AP (apurinic/apyrimidinic) lyase activity and introduces nicks in the DNA strand. Cleaves the DNA backbone by beta-delta elimination to generate a single-strand break at the site of the removed base with both 3'- and 5'-phosphates.</text>
</comment>
<comment type="catalytic activity">
    <reaction evidence="2">
        <text>Hydrolysis of DNA containing ring-opened 7-methylguanine residues, releasing 2,6-diamino-4-hydroxy-5-(N-methyl)formamidopyrimidine.</text>
        <dbReference type="EC" id="3.2.2.23"/>
    </reaction>
</comment>
<comment type="catalytic activity">
    <reaction evidence="2">
        <text>2'-deoxyribonucleotide-(2'-deoxyribose 5'-phosphate)-2'-deoxyribonucleotide-DNA = a 3'-end 2'-deoxyribonucleotide-(2,3-dehydro-2,3-deoxyribose 5'-phosphate)-DNA + a 5'-end 5'-phospho-2'-deoxyribonucleoside-DNA + H(+)</text>
        <dbReference type="Rhea" id="RHEA:66592"/>
        <dbReference type="Rhea" id="RHEA-COMP:13180"/>
        <dbReference type="Rhea" id="RHEA-COMP:16897"/>
        <dbReference type="Rhea" id="RHEA-COMP:17067"/>
        <dbReference type="ChEBI" id="CHEBI:15378"/>
        <dbReference type="ChEBI" id="CHEBI:136412"/>
        <dbReference type="ChEBI" id="CHEBI:157695"/>
        <dbReference type="ChEBI" id="CHEBI:167181"/>
        <dbReference type="EC" id="4.2.99.18"/>
    </reaction>
</comment>
<comment type="cofactor">
    <cofactor evidence="2">
        <name>Zn(2+)</name>
        <dbReference type="ChEBI" id="CHEBI:29105"/>
    </cofactor>
    <text evidence="2">Binds 1 zinc ion per subunit.</text>
</comment>
<comment type="subunit">
    <text evidence="2">Monomer.</text>
</comment>
<comment type="similarity">
    <text evidence="2">Belongs to the FPG family.</text>
</comment>
<accession>B7MFJ6</accession>